<feature type="chain" id="PRO_0000062401" description="Ribulose bisphosphate carboxylase large chain">
    <location>
        <begin position="1" status="less than"/>
        <end position="467" status="greater than"/>
    </location>
</feature>
<feature type="active site" description="Proton acceptor" evidence="1">
    <location>
        <position position="167"/>
    </location>
</feature>
<feature type="active site" description="Proton acceptor" evidence="1">
    <location>
        <position position="286"/>
    </location>
</feature>
<feature type="binding site" description="in homodimeric partner" evidence="1">
    <location>
        <position position="115"/>
    </location>
    <ligand>
        <name>substrate</name>
    </ligand>
</feature>
<feature type="binding site" evidence="1">
    <location>
        <position position="165"/>
    </location>
    <ligand>
        <name>substrate</name>
    </ligand>
</feature>
<feature type="binding site" evidence="1">
    <location>
        <position position="169"/>
    </location>
    <ligand>
        <name>substrate</name>
    </ligand>
</feature>
<feature type="binding site" description="via carbamate group" evidence="1">
    <location>
        <position position="193"/>
    </location>
    <ligand>
        <name>Mg(2+)</name>
        <dbReference type="ChEBI" id="CHEBI:18420"/>
    </ligand>
</feature>
<feature type="binding site" evidence="1">
    <location>
        <position position="195"/>
    </location>
    <ligand>
        <name>Mg(2+)</name>
        <dbReference type="ChEBI" id="CHEBI:18420"/>
    </ligand>
</feature>
<feature type="binding site" evidence="1">
    <location>
        <position position="196"/>
    </location>
    <ligand>
        <name>Mg(2+)</name>
        <dbReference type="ChEBI" id="CHEBI:18420"/>
    </ligand>
</feature>
<feature type="binding site" evidence="1">
    <location>
        <position position="287"/>
    </location>
    <ligand>
        <name>substrate</name>
    </ligand>
</feature>
<feature type="binding site" evidence="1">
    <location>
        <position position="319"/>
    </location>
    <ligand>
        <name>substrate</name>
    </ligand>
</feature>
<feature type="binding site" evidence="1">
    <location>
        <position position="371"/>
    </location>
    <ligand>
        <name>substrate</name>
    </ligand>
</feature>
<feature type="site" description="Transition state stabilizer" evidence="1">
    <location>
        <position position="326"/>
    </location>
</feature>
<feature type="modified residue" description="N6,N6,N6-trimethyllysine" evidence="1">
    <location>
        <position position="6"/>
    </location>
</feature>
<feature type="modified residue" description="N6-carboxylysine" evidence="1">
    <location>
        <position position="193"/>
    </location>
</feature>
<feature type="disulfide bond" description="Interchain; in linked form" evidence="1">
    <location>
        <position position="239"/>
    </location>
</feature>
<feature type="non-terminal residue">
    <location>
        <position position="1"/>
    </location>
</feature>
<feature type="non-terminal residue">
    <location>
        <position position="467"/>
    </location>
</feature>
<protein>
    <recommendedName>
        <fullName evidence="1">Ribulose bisphosphate carboxylase large chain</fullName>
        <shortName evidence="1">RuBisCO large subunit</shortName>
        <ecNumber evidence="1">4.1.1.39</ecNumber>
    </recommendedName>
</protein>
<organism>
    <name type="scientific">Cedrus atlantica</name>
    <name type="common">Atlas cedar</name>
    <name type="synonym">Pinus atlantica</name>
    <dbReference type="NCBI Taxonomy" id="123597"/>
    <lineage>
        <taxon>Eukaryota</taxon>
        <taxon>Viridiplantae</taxon>
        <taxon>Streptophyta</taxon>
        <taxon>Embryophyta</taxon>
        <taxon>Tracheophyta</taxon>
        <taxon>Spermatophyta</taxon>
        <taxon>Pinopsida</taxon>
        <taxon>Pinidae</taxon>
        <taxon>Conifers I</taxon>
        <taxon>Pinales</taxon>
        <taxon>Pinaceae</taxon>
        <taxon>Cedrus</taxon>
    </lineage>
</organism>
<dbReference type="EC" id="4.1.1.39" evidence="1"/>
<dbReference type="EMBL" id="AF145457">
    <property type="protein sequence ID" value="AAG09650.1"/>
    <property type="molecule type" value="Genomic_DNA"/>
</dbReference>
<dbReference type="SMR" id="Q9GGX6"/>
<dbReference type="GO" id="GO:0009507">
    <property type="term" value="C:chloroplast"/>
    <property type="evidence" value="ECO:0007669"/>
    <property type="project" value="UniProtKB-SubCell"/>
</dbReference>
<dbReference type="GO" id="GO:0000287">
    <property type="term" value="F:magnesium ion binding"/>
    <property type="evidence" value="ECO:0007669"/>
    <property type="project" value="InterPro"/>
</dbReference>
<dbReference type="GO" id="GO:0004497">
    <property type="term" value="F:monooxygenase activity"/>
    <property type="evidence" value="ECO:0007669"/>
    <property type="project" value="UniProtKB-KW"/>
</dbReference>
<dbReference type="GO" id="GO:0016984">
    <property type="term" value="F:ribulose-bisphosphate carboxylase activity"/>
    <property type="evidence" value="ECO:0007669"/>
    <property type="project" value="UniProtKB-EC"/>
</dbReference>
<dbReference type="GO" id="GO:0009853">
    <property type="term" value="P:photorespiration"/>
    <property type="evidence" value="ECO:0007669"/>
    <property type="project" value="UniProtKB-KW"/>
</dbReference>
<dbReference type="GO" id="GO:0019253">
    <property type="term" value="P:reductive pentose-phosphate cycle"/>
    <property type="evidence" value="ECO:0007669"/>
    <property type="project" value="UniProtKB-KW"/>
</dbReference>
<dbReference type="CDD" id="cd08212">
    <property type="entry name" value="RuBisCO_large_I"/>
    <property type="match status" value="1"/>
</dbReference>
<dbReference type="FunFam" id="3.20.20.110:FF:000001">
    <property type="entry name" value="Ribulose bisphosphate carboxylase large chain"/>
    <property type="match status" value="1"/>
</dbReference>
<dbReference type="FunFam" id="3.30.70.150:FF:000001">
    <property type="entry name" value="Ribulose bisphosphate carboxylase large chain"/>
    <property type="match status" value="1"/>
</dbReference>
<dbReference type="Gene3D" id="3.20.20.110">
    <property type="entry name" value="Ribulose bisphosphate carboxylase, large subunit, C-terminal domain"/>
    <property type="match status" value="1"/>
</dbReference>
<dbReference type="Gene3D" id="3.30.70.150">
    <property type="entry name" value="RuBisCO large subunit, N-terminal domain"/>
    <property type="match status" value="1"/>
</dbReference>
<dbReference type="HAMAP" id="MF_01338">
    <property type="entry name" value="RuBisCO_L_type1"/>
    <property type="match status" value="1"/>
</dbReference>
<dbReference type="InterPro" id="IPR033966">
    <property type="entry name" value="RuBisCO"/>
</dbReference>
<dbReference type="InterPro" id="IPR020878">
    <property type="entry name" value="RuBisCo_large_chain_AS"/>
</dbReference>
<dbReference type="InterPro" id="IPR000685">
    <property type="entry name" value="RuBisCO_lsu_C"/>
</dbReference>
<dbReference type="InterPro" id="IPR036376">
    <property type="entry name" value="RuBisCO_lsu_C_sf"/>
</dbReference>
<dbReference type="InterPro" id="IPR017443">
    <property type="entry name" value="RuBisCO_lsu_fd_N"/>
</dbReference>
<dbReference type="InterPro" id="IPR036422">
    <property type="entry name" value="RuBisCO_lsu_N_sf"/>
</dbReference>
<dbReference type="InterPro" id="IPR020888">
    <property type="entry name" value="RuBisCO_lsuI"/>
</dbReference>
<dbReference type="NCBIfam" id="NF003252">
    <property type="entry name" value="PRK04208.1"/>
    <property type="match status" value="1"/>
</dbReference>
<dbReference type="PANTHER" id="PTHR42704">
    <property type="entry name" value="RIBULOSE BISPHOSPHATE CARBOXYLASE"/>
    <property type="match status" value="1"/>
</dbReference>
<dbReference type="PANTHER" id="PTHR42704:SF15">
    <property type="entry name" value="RIBULOSE BISPHOSPHATE CARBOXYLASE LARGE CHAIN"/>
    <property type="match status" value="1"/>
</dbReference>
<dbReference type="Pfam" id="PF00016">
    <property type="entry name" value="RuBisCO_large"/>
    <property type="match status" value="1"/>
</dbReference>
<dbReference type="Pfam" id="PF02788">
    <property type="entry name" value="RuBisCO_large_N"/>
    <property type="match status" value="1"/>
</dbReference>
<dbReference type="SFLD" id="SFLDG01052">
    <property type="entry name" value="RuBisCO"/>
    <property type="match status" value="1"/>
</dbReference>
<dbReference type="SFLD" id="SFLDS00014">
    <property type="entry name" value="RuBisCO"/>
    <property type="match status" value="1"/>
</dbReference>
<dbReference type="SFLD" id="SFLDG00301">
    <property type="entry name" value="RuBisCO-like_proteins"/>
    <property type="match status" value="1"/>
</dbReference>
<dbReference type="SUPFAM" id="SSF51649">
    <property type="entry name" value="RuBisCo, C-terminal domain"/>
    <property type="match status" value="1"/>
</dbReference>
<dbReference type="SUPFAM" id="SSF54966">
    <property type="entry name" value="RuBisCO, large subunit, small (N-terminal) domain"/>
    <property type="match status" value="1"/>
</dbReference>
<dbReference type="PROSITE" id="PS00157">
    <property type="entry name" value="RUBISCO_LARGE"/>
    <property type="match status" value="1"/>
</dbReference>
<accession>Q9GGX6</accession>
<evidence type="ECO:0000255" key="1">
    <source>
        <dbReference type="HAMAP-Rule" id="MF_01338"/>
    </source>
</evidence>
<sequence length="467" mass="51784">ASVGFKAGVKDYRLTYYTPEYQTKDTDILAAFRVTPQPGVPPEEAGAAVAAESSTGTWTTVWTDGLTSLDRYKGRCYDIEPVPGEETQFIAYVAYPLDLFEEGSVTNLFTSIVGNVFGFKALRALRLEDLRIPPAYSKTFQGPPHGIQVERDKLNKYGRPLLGCTIKPKLGLSAKNYGRAVYECLRGGLDFTKDDENVNSQPFMRWRDRFVFCAEAIYKAQAETGEIKGHYLNATAGTCEEMMKRAVFARELGVPIIMHDYLTGGFTANTSLAHYCRDNGLLLHIHRAMHAVIDRQRIHGMHFRVLAKALRMSGGDHIHAGTVVGKLEGERDVTLGFVDLLRDDFIEKDRSRGIYFTQDWVSMPGVLPVASGGIHVWHMPALTEIFGDDSVLQFGGGTLGHPWGNAPGAVANRVALEACVQARNEGRDLAREGNEVIREASKWSPELAAACEVWKEIKFEFEAIDVL</sequence>
<reference key="1">
    <citation type="submission" date="1999-04" db="EMBL/GenBank/DDBJ databases">
        <title>The re-evaluation of the systematic positions of Nothotsuga and Hesperopeuce.</title>
        <authorList>
            <person name="Wang X.Q."/>
            <person name="Sang T."/>
        </authorList>
    </citation>
    <scope>NUCLEOTIDE SEQUENCE [GENOMIC DNA]</scope>
</reference>
<comment type="function">
    <text evidence="1">RuBisCO catalyzes two reactions: the carboxylation of D-ribulose 1,5-bisphosphate, the primary event in carbon dioxide fixation, as well as the oxidative fragmentation of the pentose substrate in the photorespiration process. Both reactions occur simultaneously and in competition at the same active site.</text>
</comment>
<comment type="catalytic activity">
    <reaction evidence="1">
        <text>2 (2R)-3-phosphoglycerate + 2 H(+) = D-ribulose 1,5-bisphosphate + CO2 + H2O</text>
        <dbReference type="Rhea" id="RHEA:23124"/>
        <dbReference type="ChEBI" id="CHEBI:15377"/>
        <dbReference type="ChEBI" id="CHEBI:15378"/>
        <dbReference type="ChEBI" id="CHEBI:16526"/>
        <dbReference type="ChEBI" id="CHEBI:57870"/>
        <dbReference type="ChEBI" id="CHEBI:58272"/>
        <dbReference type="EC" id="4.1.1.39"/>
    </reaction>
</comment>
<comment type="catalytic activity">
    <reaction evidence="1">
        <text>D-ribulose 1,5-bisphosphate + O2 = 2-phosphoglycolate + (2R)-3-phosphoglycerate + 2 H(+)</text>
        <dbReference type="Rhea" id="RHEA:36631"/>
        <dbReference type="ChEBI" id="CHEBI:15378"/>
        <dbReference type="ChEBI" id="CHEBI:15379"/>
        <dbReference type="ChEBI" id="CHEBI:57870"/>
        <dbReference type="ChEBI" id="CHEBI:58033"/>
        <dbReference type="ChEBI" id="CHEBI:58272"/>
    </reaction>
</comment>
<comment type="cofactor">
    <cofactor evidence="1">
        <name>Mg(2+)</name>
        <dbReference type="ChEBI" id="CHEBI:18420"/>
    </cofactor>
    <text evidence="1">Binds 1 Mg(2+) ion per subunit.</text>
</comment>
<comment type="subunit">
    <text evidence="1">Heterohexadecamer of 8 large chains and 8 small chains; disulfide-linked. The disulfide link is formed within the large subunit homodimers.</text>
</comment>
<comment type="subcellular location">
    <subcellularLocation>
        <location>Plastid</location>
        <location>Chloroplast</location>
    </subcellularLocation>
</comment>
<comment type="PTM">
    <text evidence="1">The disulfide bond which can form in the large chain dimeric partners within the hexadecamer appears to be associated with oxidative stress and protein turnover.</text>
</comment>
<comment type="miscellaneous">
    <text evidence="1">The basic functional RuBisCO is composed of a large chain homodimer in a 'head-to-tail' conformation. In form I RuBisCO this homodimer is arranged in a barrel-like tetramer with the small subunits forming a tetrameric 'cap' on each end of the 'barrel'.</text>
</comment>
<comment type="similarity">
    <text evidence="1">Belongs to the RuBisCO large chain family. Type I subfamily.</text>
</comment>
<geneLocation type="chloroplast"/>
<gene>
    <name evidence="1" type="primary">rbcL</name>
</gene>
<name>RBL_CEDAT</name>
<keyword id="KW-0113">Calvin cycle</keyword>
<keyword id="KW-0120">Carbon dioxide fixation</keyword>
<keyword id="KW-0150">Chloroplast</keyword>
<keyword id="KW-1015">Disulfide bond</keyword>
<keyword id="KW-0456">Lyase</keyword>
<keyword id="KW-0460">Magnesium</keyword>
<keyword id="KW-0479">Metal-binding</keyword>
<keyword id="KW-0488">Methylation</keyword>
<keyword id="KW-0503">Monooxygenase</keyword>
<keyword id="KW-0560">Oxidoreductase</keyword>
<keyword id="KW-0601">Photorespiration</keyword>
<keyword id="KW-0602">Photosynthesis</keyword>
<keyword id="KW-0934">Plastid</keyword>
<proteinExistence type="inferred from homology"/>